<feature type="chain" id="PRO_0000453965" description="L-tryptophan isonitrile synthase AmbI2">
    <location>
        <begin position="1"/>
        <end position="330"/>
    </location>
</feature>
<proteinExistence type="evidence at protein level"/>
<name>AMBI2_FISAU</name>
<organism>
    <name type="scientific">Fischerella ambigua (strain UTEX 1903)</name>
    <dbReference type="NCBI Taxonomy" id="230521"/>
    <lineage>
        <taxon>Bacteria</taxon>
        <taxon>Bacillati</taxon>
        <taxon>Cyanobacteriota</taxon>
        <taxon>Cyanophyceae</taxon>
        <taxon>Nostocales</taxon>
        <taxon>Hapalosiphonaceae</taxon>
        <taxon>Fischerella</taxon>
    </lineage>
</organism>
<gene>
    <name evidence="3" type="primary">ambI2</name>
    <name evidence="4" type="synonym">famH2</name>
</gene>
<comment type="function">
    <text evidence="1 2">Involved in the biosynthesis of ambiguines, a family of hapalindole-type alkaloids (PubMed:24180436). Responsible for the synthesis of the isonitrile group on tryptophan using ribulose 5-phosphate as the source of the carbon atom (PubMed:24180436, PubMed:28212039).</text>
</comment>
<comment type="catalytic activity">
    <reaction evidence="1 2">
        <text>D-ribulose 5-phosphate + L-tryptophan = (2S)-3-(1H-indol-3-yl)-2-isocyanopropanoate + hydroxyacetone + formaldehyde + phosphate + H2O + H(+)</text>
        <dbReference type="Rhea" id="RHEA:56696"/>
        <dbReference type="ChEBI" id="CHEBI:15377"/>
        <dbReference type="ChEBI" id="CHEBI:15378"/>
        <dbReference type="ChEBI" id="CHEBI:16842"/>
        <dbReference type="ChEBI" id="CHEBI:27957"/>
        <dbReference type="ChEBI" id="CHEBI:43474"/>
        <dbReference type="ChEBI" id="CHEBI:57912"/>
        <dbReference type="ChEBI" id="CHEBI:58121"/>
        <dbReference type="ChEBI" id="CHEBI:140652"/>
        <dbReference type="EC" id="4.1.99.25"/>
    </reaction>
    <physiologicalReaction direction="left-to-right" evidence="1 2">
        <dbReference type="Rhea" id="RHEA:56697"/>
    </physiologicalReaction>
</comment>
<comment type="miscellaneous">
    <text evidence="1">AmbI1 and AmbI3 alone are sufficient to generate Z-3-(2-isocyanoethen)-indole from L-tryptophan and ribulose 5-phosphate, but AmbI2 and AmbI3 are not, suggesting that AmbI2 is functionally redundant in vitro.</text>
</comment>
<comment type="similarity">
    <text evidence="5">Belongs to the isocyanide synthase family.</text>
</comment>
<dbReference type="EC" id="4.1.99.25" evidence="1 2"/>
<dbReference type="EMBL" id="KF664586">
    <property type="protein sequence ID" value="AHB62772.1"/>
    <property type="molecule type" value="Genomic_DNA"/>
</dbReference>
<dbReference type="EMBL" id="KJ742065">
    <property type="protein sequence ID" value="AIJ28555.1"/>
    <property type="molecule type" value="Genomic_DNA"/>
</dbReference>
<dbReference type="EMBL" id="KX451322">
    <property type="protein sequence ID" value="APB62258.1"/>
    <property type="molecule type" value="Genomic_DNA"/>
</dbReference>
<dbReference type="SMR" id="V5TES5"/>
<dbReference type="BioCyc" id="MetaCyc:MONOMER-20402"/>
<dbReference type="GO" id="GO:0016829">
    <property type="term" value="F:lyase activity"/>
    <property type="evidence" value="ECO:0007669"/>
    <property type="project" value="UniProtKB-KW"/>
</dbReference>
<dbReference type="Gene3D" id="3.30.60.140">
    <property type="match status" value="1"/>
</dbReference>
<dbReference type="InterPro" id="IPR007817">
    <property type="entry name" value="Isocyanide_synthase_DIT1"/>
</dbReference>
<dbReference type="InterPro" id="IPR017133">
    <property type="entry name" value="PvcA"/>
</dbReference>
<dbReference type="PANTHER" id="PTHR37285">
    <property type="entry name" value="SPORE WALL MATURATION PROTEIN DIT1"/>
    <property type="match status" value="1"/>
</dbReference>
<dbReference type="PANTHER" id="PTHR37285:SF5">
    <property type="entry name" value="SPORE WALL MATURATION PROTEIN DIT1"/>
    <property type="match status" value="1"/>
</dbReference>
<dbReference type="Pfam" id="PF05141">
    <property type="entry name" value="DIT1_PvcA"/>
    <property type="match status" value="1"/>
</dbReference>
<dbReference type="PIRSF" id="PIRSF037196">
    <property type="entry name" value="Pyoverdine_chromoph_PvcA"/>
    <property type="match status" value="1"/>
</dbReference>
<keyword id="KW-0456">Lyase</keyword>
<protein>
    <recommendedName>
        <fullName evidence="5">L-tryptophan isonitrile synthase AmbI2</fullName>
        <ecNumber evidence="1 2">4.1.99.25</ecNumber>
    </recommendedName>
</protein>
<reference key="1">
    <citation type="journal article" date="2014" name="ACS Chem. Biol.">
        <title>Biosynthesis of ambiguine indole alkaloids in cyanobacterium Fischerella ambigua.</title>
        <authorList>
            <person name="Hillwig M.L."/>
            <person name="Zhu Q."/>
            <person name="Liu X."/>
        </authorList>
    </citation>
    <scope>NUCLEOTIDE SEQUENCE [GENOMIC DNA]</scope>
    <scope>FUNCTION</scope>
    <scope>CATALYTIC ACTIVITY</scope>
    <source>
        <strain>UTEX 1903</strain>
    </source>
</reference>
<reference key="2">
    <citation type="journal article" date="2014" name="BMC Microbiol.">
        <title>Comparative analysis of hapalindole, ambiguine and welwitindolinone gene clusters and reconstitution of indole-isonitrile biosynthesis from cyanobacteria.</title>
        <authorList>
            <person name="Micallef M.L."/>
            <person name="Sharma D."/>
            <person name="Bunn B.M."/>
            <person name="Gerwick L."/>
            <person name="Viswanathan R."/>
            <person name="Moffitt M.C."/>
        </authorList>
    </citation>
    <scope>NUCLEOTIDE SEQUENCE [GENOMIC DNA]</scope>
    <source>
        <strain>UTEX 1903</strain>
    </source>
</reference>
<reference key="3">
    <citation type="journal article" date="2015" name="J. Am. Chem. Soc.">
        <title>Hapalindole/ambiguine biogenesis is mediated by a cope rearrangement, C-C bond-forming cascade.</title>
        <authorList>
            <person name="Li S."/>
            <person name="Lowell A.N."/>
            <person name="Yu F."/>
            <person name="Raveh A."/>
            <person name="Newmister S.A."/>
            <person name="Bair N."/>
            <person name="Schaub J.M."/>
            <person name="Williams R.M."/>
            <person name="Sherman D.H."/>
        </authorList>
    </citation>
    <scope>NUCLEOTIDE SEQUENCE [GENOMIC DNA]</scope>
    <source>
        <strain>UTEX 1903</strain>
    </source>
</reference>
<reference key="4">
    <citation type="journal article" date="2017" name="Org. Lett.">
        <title>In vitro stepwise reconstitution of amino acid derived vinyl isocyanide biosynthesis: detection of an elusive intermediate.</title>
        <authorList>
            <person name="Chang W.C."/>
            <person name="Sanyal D."/>
            <person name="Huang J.L."/>
            <person name="Ittiamornkul K."/>
            <person name="Zhu Q."/>
            <person name="Liu X."/>
        </authorList>
    </citation>
    <scope>FUNCTION</scope>
    <scope>CATALYTIC ACTIVITY</scope>
</reference>
<sequence>MTQIINITQSKVISEQILRHVFRHRRLISDTEPCVHQPCSLCLAPHLEKVQYFVEHNEPIHFILPAFPAKSPNTQKVLGTMPDMGEQVSLKFLQSLCDQISEIYAPGAKLTICSDGRVFSDLVGVTDENVTLYGQIIQALLKEMKADAIDVFNLEDMYTDLSFDEMRQKLVKLYGQTIEAIKDAVKNNDHQCQMFNGIHRFLVEDYQVLEAHKSRNKIRLECKTRAYEVIQRSNAWSVLISELYPHSVRLSIHPQHYHSEKIGIHMIKTLDQWGTPWHNATVFDGKEFMLMKRSHLESMGATLVCQNGHPSYFAWTEQPLETRITVQEVI</sequence>
<accession>V5TES5</accession>
<evidence type="ECO:0000269" key="1">
    <source>
    </source>
</evidence>
<evidence type="ECO:0000269" key="2">
    <source>
    </source>
</evidence>
<evidence type="ECO:0000303" key="3">
    <source>
    </source>
</evidence>
<evidence type="ECO:0000303" key="4">
    <source>
    </source>
</evidence>
<evidence type="ECO:0000305" key="5"/>